<organism>
    <name type="scientific">Bacillus subtilis (strain 168)</name>
    <dbReference type="NCBI Taxonomy" id="224308"/>
    <lineage>
        <taxon>Bacteria</taxon>
        <taxon>Bacillati</taxon>
        <taxon>Bacillota</taxon>
        <taxon>Bacilli</taxon>
        <taxon>Bacillales</taxon>
        <taxon>Bacillaceae</taxon>
        <taxon>Bacillus</taxon>
    </lineage>
</organism>
<gene>
    <name type="primary">yvdM</name>
    <name type="ordered locus">BSU34550</name>
</gene>
<comment type="function">
    <text evidence="1">Catalyzes the interconversion of D-glucose 1-phosphate (G1P) and D-glucose 6-phosphate (G6P), forming beta-D-glucose 1,6-(bis)phosphate (beta-G16P) as an intermediate.</text>
</comment>
<comment type="catalytic activity">
    <reaction evidence="1">
        <text>beta-D-glucose 1-phosphate = beta-D-glucose 6-phosphate</text>
        <dbReference type="Rhea" id="RHEA:20113"/>
        <dbReference type="ChEBI" id="CHEBI:57684"/>
        <dbReference type="ChEBI" id="CHEBI:58247"/>
        <dbReference type="EC" id="5.4.2.6"/>
    </reaction>
</comment>
<comment type="cofactor">
    <cofactor evidence="1">
        <name>Mg(2+)</name>
        <dbReference type="ChEBI" id="CHEBI:18420"/>
    </cofactor>
    <text evidence="1">Binds 1 magnesium ion per subunit.</text>
</comment>
<comment type="subunit">
    <text evidence="2">Homodimer.</text>
</comment>
<comment type="subcellular location">
    <subcellularLocation>
        <location evidence="3">Cytoplasm</location>
    </subcellularLocation>
</comment>
<comment type="PTM">
    <text evidence="1">Autophosphorylated.</text>
</comment>
<comment type="miscellaneous">
    <text evidence="1">The catalysis proceeds via a phosphoenzyme formed by reaction of an active-site nucleophile with the cofactor glucose 1,6-diphosphate (G1,6-diP). The phosphorylated mutase binds either G1P or G6P and transfers the phosphoryl group to the C(6)OH or C(1)OH, respectively.</text>
</comment>
<comment type="similarity">
    <text evidence="3">Belongs to the HAD-like hydrolase superfamily. CbbY/CbbZ/Gph/YieH family.</text>
</comment>
<proteinExistence type="evidence at protein level"/>
<evidence type="ECO:0000250" key="1">
    <source>
        <dbReference type="UniProtKB" id="P71447"/>
    </source>
</evidence>
<evidence type="ECO:0000269" key="2">
    <source ref="3"/>
</evidence>
<evidence type="ECO:0000305" key="3"/>
<evidence type="ECO:0007744" key="4">
    <source>
        <dbReference type="PDB" id="3NAS"/>
    </source>
</evidence>
<evidence type="ECO:0007829" key="5">
    <source>
        <dbReference type="PDB" id="3NAS"/>
    </source>
</evidence>
<keyword id="KW-0002">3D-structure</keyword>
<keyword id="KW-0119">Carbohydrate metabolism</keyword>
<keyword id="KW-0963">Cytoplasm</keyword>
<keyword id="KW-0413">Isomerase</keyword>
<keyword id="KW-0460">Magnesium</keyword>
<keyword id="KW-0479">Metal-binding</keyword>
<keyword id="KW-0597">Phosphoprotein</keyword>
<keyword id="KW-1185">Reference proteome</keyword>
<dbReference type="EC" id="5.4.2.6" evidence="1"/>
<dbReference type="EMBL" id="Z94043">
    <property type="protein sequence ID" value="CAB08042.1"/>
    <property type="molecule type" value="Genomic_DNA"/>
</dbReference>
<dbReference type="EMBL" id="AL009126">
    <property type="protein sequence ID" value="CAB15460.1"/>
    <property type="molecule type" value="Genomic_DNA"/>
</dbReference>
<dbReference type="PIR" id="E70034">
    <property type="entry name" value="E70034"/>
</dbReference>
<dbReference type="PDB" id="3NAS">
    <property type="method" value="X-ray"/>
    <property type="resolution" value="3.00 A"/>
    <property type="chains" value="A/B=2-224"/>
</dbReference>
<dbReference type="PDBsum" id="3NAS"/>
<dbReference type="SMR" id="O06995"/>
<dbReference type="FunCoup" id="O06995">
    <property type="interactions" value="90"/>
</dbReference>
<dbReference type="STRING" id="224308.BSU34550"/>
<dbReference type="PaxDb" id="224308-BSU34550"/>
<dbReference type="DNASU" id="938624"/>
<dbReference type="EnsemblBacteria" id="CAB15460">
    <property type="protein sequence ID" value="CAB15460"/>
    <property type="gene ID" value="BSU_34550"/>
</dbReference>
<dbReference type="GeneID" id="938624"/>
<dbReference type="KEGG" id="bsu:BSU34550"/>
<dbReference type="PATRIC" id="fig|224308.179.peg.3742"/>
<dbReference type="eggNOG" id="COG0637">
    <property type="taxonomic scope" value="Bacteria"/>
</dbReference>
<dbReference type="InParanoid" id="O06995"/>
<dbReference type="OrthoDB" id="9797743at2"/>
<dbReference type="PhylomeDB" id="O06995"/>
<dbReference type="BioCyc" id="BSUB:BSU34550-MONOMER"/>
<dbReference type="EvolutionaryTrace" id="O06995"/>
<dbReference type="Proteomes" id="UP000001570">
    <property type="component" value="Chromosome"/>
</dbReference>
<dbReference type="GO" id="GO:0005737">
    <property type="term" value="C:cytoplasm"/>
    <property type="evidence" value="ECO:0007669"/>
    <property type="project" value="UniProtKB-SubCell"/>
</dbReference>
<dbReference type="GO" id="GO:0008801">
    <property type="term" value="F:beta-phosphoglucomutase activity"/>
    <property type="evidence" value="ECO:0000250"/>
    <property type="project" value="UniProtKB"/>
</dbReference>
<dbReference type="GO" id="GO:0000287">
    <property type="term" value="F:magnesium ion binding"/>
    <property type="evidence" value="ECO:0000250"/>
    <property type="project" value="UniProtKB"/>
</dbReference>
<dbReference type="GO" id="GO:0005975">
    <property type="term" value="P:carbohydrate metabolic process"/>
    <property type="evidence" value="ECO:0000250"/>
    <property type="project" value="UniProtKB"/>
</dbReference>
<dbReference type="CDD" id="cd02598">
    <property type="entry name" value="HAD_BPGM"/>
    <property type="match status" value="1"/>
</dbReference>
<dbReference type="FunFam" id="1.10.150.240:FF:000010">
    <property type="entry name" value="Beta-phosphoglucomutase"/>
    <property type="match status" value="1"/>
</dbReference>
<dbReference type="Gene3D" id="3.40.50.1000">
    <property type="entry name" value="HAD superfamily/HAD-like"/>
    <property type="match status" value="1"/>
</dbReference>
<dbReference type="Gene3D" id="1.10.150.240">
    <property type="entry name" value="Putative phosphatase, domain 2"/>
    <property type="match status" value="1"/>
</dbReference>
<dbReference type="InterPro" id="IPR010976">
    <property type="entry name" value="B-phosphoglucomutase_hydrolase"/>
</dbReference>
<dbReference type="InterPro" id="IPR010972">
    <property type="entry name" value="Beta-PGM"/>
</dbReference>
<dbReference type="InterPro" id="IPR036412">
    <property type="entry name" value="HAD-like_sf"/>
</dbReference>
<dbReference type="InterPro" id="IPR006439">
    <property type="entry name" value="HAD-SF_hydro_IA"/>
</dbReference>
<dbReference type="InterPro" id="IPR023214">
    <property type="entry name" value="HAD_sf"/>
</dbReference>
<dbReference type="InterPro" id="IPR023198">
    <property type="entry name" value="PGP-like_dom2"/>
</dbReference>
<dbReference type="NCBIfam" id="TIGR01990">
    <property type="entry name" value="bPGM"/>
    <property type="match status" value="1"/>
</dbReference>
<dbReference type="NCBIfam" id="TIGR01509">
    <property type="entry name" value="HAD-SF-IA-v3"/>
    <property type="match status" value="1"/>
</dbReference>
<dbReference type="NCBIfam" id="TIGR02009">
    <property type="entry name" value="PGMB-YQAB-SF"/>
    <property type="match status" value="1"/>
</dbReference>
<dbReference type="PANTHER" id="PTHR18901">
    <property type="entry name" value="2-DEOXYGLUCOSE-6-PHOSPHATE PHOSPHATASE 2"/>
    <property type="match status" value="1"/>
</dbReference>
<dbReference type="PANTHER" id="PTHR18901:SF38">
    <property type="entry name" value="PSEUDOURIDINE-5'-PHOSPHATASE"/>
    <property type="match status" value="1"/>
</dbReference>
<dbReference type="Pfam" id="PF00702">
    <property type="entry name" value="Hydrolase"/>
    <property type="match status" value="1"/>
</dbReference>
<dbReference type="SFLD" id="SFLDF00046">
    <property type="entry name" value="beta-phosphoglucomutase"/>
    <property type="match status" value="1"/>
</dbReference>
<dbReference type="SFLD" id="SFLDS00003">
    <property type="entry name" value="Haloacid_Dehalogenase"/>
    <property type="match status" value="1"/>
</dbReference>
<dbReference type="SUPFAM" id="SSF56784">
    <property type="entry name" value="HAD-like"/>
    <property type="match status" value="1"/>
</dbReference>
<feature type="chain" id="PRO_0000108051" description="Beta-phosphoglucomutase">
    <location>
        <begin position="1"/>
        <end position="226"/>
    </location>
</feature>
<feature type="active site" description="Nucleophile" evidence="1">
    <location>
        <position position="7"/>
    </location>
</feature>
<feature type="active site" description="Proton donor/acceptor" evidence="1">
    <location>
        <position position="9"/>
    </location>
</feature>
<feature type="binding site" evidence="1">
    <location>
        <position position="7"/>
    </location>
    <ligand>
        <name>Mg(2+)</name>
        <dbReference type="ChEBI" id="CHEBI:18420"/>
    </ligand>
</feature>
<feature type="binding site" evidence="1">
    <location>
        <position position="9"/>
    </location>
    <ligand>
        <name>beta-D-glucose 6-phosphate</name>
        <dbReference type="ChEBI" id="CHEBI:58247"/>
    </ligand>
</feature>
<feature type="binding site" evidence="1">
    <location>
        <position position="9"/>
    </location>
    <ligand>
        <name>Mg(2+)</name>
        <dbReference type="ChEBI" id="CHEBI:18420"/>
    </ligand>
</feature>
<feature type="binding site" evidence="1">
    <location>
        <position position="44"/>
    </location>
    <ligand>
        <name>beta-D-glucose 6-phosphate</name>
        <dbReference type="ChEBI" id="CHEBI:58247"/>
    </ligand>
</feature>
<feature type="binding site" evidence="1">
    <location>
        <position position="45"/>
    </location>
    <ligand>
        <name>beta-D-glucose 6-phosphate</name>
        <dbReference type="ChEBI" id="CHEBI:58247"/>
    </ligand>
</feature>
<feature type="binding site" evidence="1">
    <location>
        <position position="47"/>
    </location>
    <ligand>
        <name>beta-D-glucose 6-phosphate</name>
        <dbReference type="ChEBI" id="CHEBI:58247"/>
    </ligand>
</feature>
<feature type="binding site" evidence="1">
    <location>
        <position position="116"/>
    </location>
    <ligand>
        <name>beta-D-glucose 6-phosphate</name>
        <dbReference type="ChEBI" id="CHEBI:58247"/>
    </ligand>
</feature>
<feature type="binding site" evidence="1">
    <location>
        <position position="117"/>
    </location>
    <ligand>
        <name>beta-D-glucose 6-phosphate</name>
        <dbReference type="ChEBI" id="CHEBI:58247"/>
    </ligand>
</feature>
<feature type="binding site" evidence="1">
    <location>
        <position position="118"/>
    </location>
    <ligand>
        <name>beta-D-glucose 6-phosphate</name>
        <dbReference type="ChEBI" id="CHEBI:58247"/>
    </ligand>
</feature>
<feature type="binding site" evidence="1">
    <location>
        <position position="170"/>
    </location>
    <ligand>
        <name>Mg(2+)</name>
        <dbReference type="ChEBI" id="CHEBI:18420"/>
    </ligand>
</feature>
<feature type="modified residue" description="4-aspartylphosphate" evidence="1">
    <location>
        <position position="7"/>
    </location>
</feature>
<feature type="strand" evidence="5">
    <location>
        <begin position="3"/>
        <end position="6"/>
    </location>
</feature>
<feature type="turn" evidence="5">
    <location>
        <begin position="10"/>
        <end position="12"/>
    </location>
</feature>
<feature type="helix" evidence="5">
    <location>
        <begin position="15"/>
        <end position="29"/>
    </location>
</feature>
<feature type="helix" evidence="5">
    <location>
        <begin position="36"/>
        <end position="41"/>
    </location>
</feature>
<feature type="turn" evidence="5">
    <location>
        <begin position="42"/>
        <end position="44"/>
    </location>
</feature>
<feature type="helix" evidence="5">
    <location>
        <begin position="47"/>
        <end position="57"/>
    </location>
</feature>
<feature type="turn" evidence="5">
    <location>
        <begin position="61"/>
        <end position="63"/>
    </location>
</feature>
<feature type="helix" evidence="5">
    <location>
        <begin position="66"/>
        <end position="85"/>
    </location>
</feature>
<feature type="helix" evidence="5">
    <location>
        <begin position="89"/>
        <end position="91"/>
    </location>
</feature>
<feature type="helix" evidence="5">
    <location>
        <begin position="96"/>
        <end position="105"/>
    </location>
</feature>
<feature type="strand" evidence="5">
    <location>
        <begin position="109"/>
        <end position="112"/>
    </location>
</feature>
<feature type="helix" evidence="5">
    <location>
        <begin position="119"/>
        <end position="125"/>
    </location>
</feature>
<feature type="turn" evidence="5">
    <location>
        <begin position="129"/>
        <end position="131"/>
    </location>
</feature>
<feature type="strand" evidence="5">
    <location>
        <begin position="133"/>
        <end position="135"/>
    </location>
</feature>
<feature type="helix" evidence="5">
    <location>
        <begin position="150"/>
        <end position="158"/>
    </location>
</feature>
<feature type="helix" evidence="5">
    <location>
        <begin position="162"/>
        <end position="164"/>
    </location>
</feature>
<feature type="strand" evidence="5">
    <location>
        <begin position="165"/>
        <end position="169"/>
    </location>
</feature>
<feature type="helix" evidence="5">
    <location>
        <begin position="172"/>
        <end position="180"/>
    </location>
</feature>
<feature type="strand" evidence="5">
    <location>
        <begin position="184"/>
        <end position="187"/>
    </location>
</feature>
<feature type="helix" evidence="5">
    <location>
        <begin position="192"/>
        <end position="194"/>
    </location>
</feature>
<feature type="strand" evidence="5">
    <location>
        <begin position="198"/>
        <end position="200"/>
    </location>
</feature>
<feature type="helix" evidence="5">
    <location>
        <begin position="204"/>
        <end position="206"/>
    </location>
</feature>
<feature type="helix" evidence="5">
    <location>
        <begin position="209"/>
        <end position="221"/>
    </location>
</feature>
<name>PGMB_BACSU</name>
<accession>O06995</accession>
<protein>
    <recommendedName>
        <fullName>Beta-phosphoglucomutase</fullName>
        <shortName>Beta-PGM</shortName>
        <ecNumber evidence="1">5.4.2.6</ecNumber>
    </recommendedName>
</protein>
<sequence>MKAVIFDLDGVITDTAEYHFLAWKHIAEQIDIPFDRDMNERLKGISREESLESILIFGGAETKYTNAEKQELMHRKNRDYQMLISKLTPEDLLPGIGRLLCQLKNENIKIGLASSSRNAPKILRRLAIIDDFHAIVDPTTLAKGKPDPDIFLTAAAMLDVSPADCAAIEDAEAGISAIKSAGMFAVGVGQGQPMLGADLVVRQTSDLTLELLHEEWEQYRIRESIP</sequence>
<reference key="1">
    <citation type="submission" date="1997-04" db="EMBL/GenBank/DDBJ databases">
        <authorList>
            <person name="Denizot F."/>
        </authorList>
    </citation>
    <scope>NUCLEOTIDE SEQUENCE [GENOMIC DNA]</scope>
    <source>
        <strain>168</strain>
    </source>
</reference>
<reference key="2">
    <citation type="journal article" date="1997" name="Nature">
        <title>The complete genome sequence of the Gram-positive bacterium Bacillus subtilis.</title>
        <authorList>
            <person name="Kunst F."/>
            <person name="Ogasawara N."/>
            <person name="Moszer I."/>
            <person name="Albertini A.M."/>
            <person name="Alloni G."/>
            <person name="Azevedo V."/>
            <person name="Bertero M.G."/>
            <person name="Bessieres P."/>
            <person name="Bolotin A."/>
            <person name="Borchert S."/>
            <person name="Borriss R."/>
            <person name="Boursier L."/>
            <person name="Brans A."/>
            <person name="Braun M."/>
            <person name="Brignell S.C."/>
            <person name="Bron S."/>
            <person name="Brouillet S."/>
            <person name="Bruschi C.V."/>
            <person name="Caldwell B."/>
            <person name="Capuano V."/>
            <person name="Carter N.M."/>
            <person name="Choi S.-K."/>
            <person name="Codani J.-J."/>
            <person name="Connerton I.F."/>
            <person name="Cummings N.J."/>
            <person name="Daniel R.A."/>
            <person name="Denizot F."/>
            <person name="Devine K.M."/>
            <person name="Duesterhoeft A."/>
            <person name="Ehrlich S.D."/>
            <person name="Emmerson P.T."/>
            <person name="Entian K.-D."/>
            <person name="Errington J."/>
            <person name="Fabret C."/>
            <person name="Ferrari E."/>
            <person name="Foulger D."/>
            <person name="Fritz C."/>
            <person name="Fujita M."/>
            <person name="Fujita Y."/>
            <person name="Fuma S."/>
            <person name="Galizzi A."/>
            <person name="Galleron N."/>
            <person name="Ghim S.-Y."/>
            <person name="Glaser P."/>
            <person name="Goffeau A."/>
            <person name="Golightly E.J."/>
            <person name="Grandi G."/>
            <person name="Guiseppi G."/>
            <person name="Guy B.J."/>
            <person name="Haga K."/>
            <person name="Haiech J."/>
            <person name="Harwood C.R."/>
            <person name="Henaut A."/>
            <person name="Hilbert H."/>
            <person name="Holsappel S."/>
            <person name="Hosono S."/>
            <person name="Hullo M.-F."/>
            <person name="Itaya M."/>
            <person name="Jones L.-M."/>
            <person name="Joris B."/>
            <person name="Karamata D."/>
            <person name="Kasahara Y."/>
            <person name="Klaerr-Blanchard M."/>
            <person name="Klein C."/>
            <person name="Kobayashi Y."/>
            <person name="Koetter P."/>
            <person name="Koningstein G."/>
            <person name="Krogh S."/>
            <person name="Kumano M."/>
            <person name="Kurita K."/>
            <person name="Lapidus A."/>
            <person name="Lardinois S."/>
            <person name="Lauber J."/>
            <person name="Lazarevic V."/>
            <person name="Lee S.-M."/>
            <person name="Levine A."/>
            <person name="Liu H."/>
            <person name="Masuda S."/>
            <person name="Mauel C."/>
            <person name="Medigue C."/>
            <person name="Medina N."/>
            <person name="Mellado R.P."/>
            <person name="Mizuno M."/>
            <person name="Moestl D."/>
            <person name="Nakai S."/>
            <person name="Noback M."/>
            <person name="Noone D."/>
            <person name="O'Reilly M."/>
            <person name="Ogawa K."/>
            <person name="Ogiwara A."/>
            <person name="Oudega B."/>
            <person name="Park S.-H."/>
            <person name="Parro V."/>
            <person name="Pohl T.M."/>
            <person name="Portetelle D."/>
            <person name="Porwollik S."/>
            <person name="Prescott A.M."/>
            <person name="Presecan E."/>
            <person name="Pujic P."/>
            <person name="Purnelle B."/>
            <person name="Rapoport G."/>
            <person name="Rey M."/>
            <person name="Reynolds S."/>
            <person name="Rieger M."/>
            <person name="Rivolta C."/>
            <person name="Rocha E."/>
            <person name="Roche B."/>
            <person name="Rose M."/>
            <person name="Sadaie Y."/>
            <person name="Sato T."/>
            <person name="Scanlan E."/>
            <person name="Schleich S."/>
            <person name="Schroeter R."/>
            <person name="Scoffone F."/>
            <person name="Sekiguchi J."/>
            <person name="Sekowska A."/>
            <person name="Seror S.J."/>
            <person name="Serror P."/>
            <person name="Shin B.-S."/>
            <person name="Soldo B."/>
            <person name="Sorokin A."/>
            <person name="Tacconi E."/>
            <person name="Takagi T."/>
            <person name="Takahashi H."/>
            <person name="Takemaru K."/>
            <person name="Takeuchi M."/>
            <person name="Tamakoshi A."/>
            <person name="Tanaka T."/>
            <person name="Terpstra P."/>
            <person name="Tognoni A."/>
            <person name="Tosato V."/>
            <person name="Uchiyama S."/>
            <person name="Vandenbol M."/>
            <person name="Vannier F."/>
            <person name="Vassarotti A."/>
            <person name="Viari A."/>
            <person name="Wambutt R."/>
            <person name="Wedler E."/>
            <person name="Wedler H."/>
            <person name="Weitzenegger T."/>
            <person name="Winters P."/>
            <person name="Wipat A."/>
            <person name="Yamamoto H."/>
            <person name="Yamane K."/>
            <person name="Yasumoto K."/>
            <person name="Yata K."/>
            <person name="Yoshida K."/>
            <person name="Yoshikawa H.-F."/>
            <person name="Zumstein E."/>
            <person name="Yoshikawa H."/>
            <person name="Danchin A."/>
        </authorList>
    </citation>
    <scope>NUCLEOTIDE SEQUENCE [LARGE SCALE GENOMIC DNA]</scope>
    <source>
        <strain>168</strain>
    </source>
</reference>
<reference evidence="4" key="3">
    <citation type="submission" date="2010-07" db="PDB data bank">
        <title>The crystal structure of beta-phosphoglucomutase from bacillus subtilis.</title>
        <authorList>
            <consortium name="New York structural genomix research consortium (NYSGXRC)"/>
        </authorList>
    </citation>
    <scope>X-RAY CRYSTALLOGRAPHY (3.0 ANGSTROMS) OF 2-224</scope>
    <scope>SUBUNIT</scope>
</reference>